<keyword id="KW-0158">Chromosome</keyword>
<keyword id="KW-0227">DNA damage</keyword>
<keyword id="KW-0234">DNA repair</keyword>
<keyword id="KW-0378">Hydrolase</keyword>
<keyword id="KW-0479">Metal-binding</keyword>
<keyword id="KW-0482">Metalloprotease</keyword>
<keyword id="KW-0539">Nucleus</keyword>
<keyword id="KW-0645">Protease</keyword>
<keyword id="KW-1185">Reference proteome</keyword>
<keyword id="KW-0862">Zinc</keyword>
<keyword id="KW-0863">Zinc-finger</keyword>
<evidence type="ECO:0000250" key="1">
    <source>
        <dbReference type="UniProtKB" id="Q9H040"/>
    </source>
</evidence>
<evidence type="ECO:0000255" key="2">
    <source>
        <dbReference type="PROSITE-ProRule" id="PRU01256"/>
    </source>
</evidence>
<evidence type="ECO:0000255" key="3">
    <source>
        <dbReference type="PROSITE-ProRule" id="PRU10095"/>
    </source>
</evidence>
<evidence type="ECO:0000256" key="4">
    <source>
        <dbReference type="SAM" id="MobiDB-lite"/>
    </source>
</evidence>
<evidence type="ECO:0000269" key="5">
    <source>
    </source>
</evidence>
<evidence type="ECO:0000269" key="6">
    <source>
    </source>
</evidence>
<evidence type="ECO:0000303" key="7">
    <source>
    </source>
</evidence>
<evidence type="ECO:0000305" key="8"/>
<comment type="function">
    <text evidence="5 6">DNA-dependent metalloendopeptidase that mediates the proteolytic cleavage of covalent DNA-protein cross-links (DPCs) during DNA synthesis, thereby playing a key role in maintaining genomic integrity (PubMed:27871365). DPCs are highly toxic DNA lesions that interfere with essential chromatin transactions, such as replication and transcription, and which are induced by reactive agents, such as UV light or formaldehyde (PubMed:27871365). Associates with the DNA replication machinery and specifically removes DPCs during DNA synthesis (PubMed:27871365). Regulator of UV-induced DNA damage response: required to protect genome stability during DNA replication, possibly via recruitment of vcp/p97 (cdc-48.1 or cdc-48.2) recruitment (PubMed:23042605).</text>
</comment>
<comment type="subunit">
    <text evidence="5">Interacts with vcp/p97 (cdc-48.1 or cdc-48.2).</text>
</comment>
<comment type="subcellular location">
    <subcellularLocation>
        <location evidence="5">Nucleus</location>
    </subcellularLocation>
    <subcellularLocation>
        <location evidence="5">Chromosome</location>
    </subcellularLocation>
    <text>Localizes to nuclear foci following UV treatment.</text>
</comment>
<comment type="disruption phenotype">
    <text evidence="5">In normal conditions, no obvious developmental or behavioral defects are observed, except that but the brood size is smaller. Upon exposure of L1 larvae to hydroxyurea, replication stress sensitivity is observed, resulting in increased sterility.</text>
</comment>
<comment type="similarity">
    <text evidence="8">Belongs to the Spartan family.</text>
</comment>
<protein>
    <recommendedName>
        <fullName evidence="8">DNA-dependent metalloprotease dvc-1</fullName>
        <ecNumber evidence="1">3.4.24.-</ecNumber>
    </recommendedName>
    <alternativeName>
        <fullName evidence="7">DNA damage protein targeting VCP</fullName>
        <shortName evidence="7">DVC1</shortName>
    </alternativeName>
    <alternativeName>
        <fullName evidence="1">Protein with SprT-like domain at the N terminus</fullName>
        <shortName evidence="1">Spartan</shortName>
    </alternativeName>
</protein>
<organism>
    <name type="scientific">Caenorhabditis elegans</name>
    <dbReference type="NCBI Taxonomy" id="6239"/>
    <lineage>
        <taxon>Eukaryota</taxon>
        <taxon>Metazoa</taxon>
        <taxon>Ecdysozoa</taxon>
        <taxon>Nematoda</taxon>
        <taxon>Chromadorea</taxon>
        <taxon>Rhabditida</taxon>
        <taxon>Rhabditina</taxon>
        <taxon>Rhabditomorpha</taxon>
        <taxon>Rhabditoidea</taxon>
        <taxon>Rhabditidae</taxon>
        <taxon>Peloderinae</taxon>
        <taxon>Caenorhabditis</taxon>
    </lineage>
</organism>
<name>SPRTN_CAEEL</name>
<dbReference type="EC" id="3.4.24.-" evidence="1"/>
<dbReference type="EMBL" id="Z74043">
    <property type="protein sequence ID" value="CAA98538.1"/>
    <property type="molecule type" value="Genomic_DNA"/>
</dbReference>
<dbReference type="PIR" id="T24974">
    <property type="entry name" value="T24974"/>
</dbReference>
<dbReference type="RefSeq" id="NP_001369944.1">
    <property type="nucleotide sequence ID" value="NM_001383402.2"/>
</dbReference>
<dbReference type="RefSeq" id="NP_505853.1">
    <property type="nucleotide sequence ID" value="NM_073452.6"/>
</dbReference>
<dbReference type="SMR" id="Q22557"/>
<dbReference type="BioGRID" id="44581">
    <property type="interactions" value="4"/>
</dbReference>
<dbReference type="FunCoup" id="Q22557">
    <property type="interactions" value="2056"/>
</dbReference>
<dbReference type="IntAct" id="Q22557">
    <property type="interactions" value="1"/>
</dbReference>
<dbReference type="STRING" id="6239.T19B10.6.2"/>
<dbReference type="PaxDb" id="6239-T19B10.6.1"/>
<dbReference type="EnsemblMetazoa" id="T19B10.6.1">
    <property type="protein sequence ID" value="T19B10.6.1"/>
    <property type="gene ID" value="WBGene00011834"/>
</dbReference>
<dbReference type="EnsemblMetazoa" id="T19B10.6.2">
    <property type="protein sequence ID" value="T19B10.6.2"/>
    <property type="gene ID" value="WBGene00011834"/>
</dbReference>
<dbReference type="EnsemblMetazoa" id="T19B10.6.3">
    <property type="protein sequence ID" value="T19B10.6.3"/>
    <property type="gene ID" value="WBGene00011834"/>
</dbReference>
<dbReference type="GeneID" id="179554"/>
<dbReference type="UCSC" id="T19B10.6.1">
    <property type="organism name" value="c. elegans"/>
</dbReference>
<dbReference type="AGR" id="WB:WBGene00011834"/>
<dbReference type="WormBase" id="T19B10.6">
    <property type="protein sequence ID" value="CE06460"/>
    <property type="gene ID" value="WBGene00011834"/>
    <property type="gene designation" value="dvc-1"/>
</dbReference>
<dbReference type="eggNOG" id="KOG3931">
    <property type="taxonomic scope" value="Eukaryota"/>
</dbReference>
<dbReference type="GeneTree" id="ENSGT00390000003585"/>
<dbReference type="HOGENOM" id="CLU_019426_0_0_1"/>
<dbReference type="InParanoid" id="Q22557"/>
<dbReference type="OMA" id="PCANRPP"/>
<dbReference type="OrthoDB" id="5236983at2759"/>
<dbReference type="PhylomeDB" id="Q22557"/>
<dbReference type="Reactome" id="R-CEL-110320">
    <property type="pathway name" value="Translesion Synthesis by POLH"/>
</dbReference>
<dbReference type="PRO" id="PR:Q22557"/>
<dbReference type="Proteomes" id="UP000001940">
    <property type="component" value="Chromosome V"/>
</dbReference>
<dbReference type="Bgee" id="WBGene00011834">
    <property type="expression patterns" value="Expressed in adult organism and 4 other cell types or tissues"/>
</dbReference>
<dbReference type="GO" id="GO:0005694">
    <property type="term" value="C:chromosome"/>
    <property type="evidence" value="ECO:0007669"/>
    <property type="project" value="UniProtKB-SubCell"/>
</dbReference>
<dbReference type="GO" id="GO:0005634">
    <property type="term" value="C:nucleus"/>
    <property type="evidence" value="ECO:0000314"/>
    <property type="project" value="UniProtKB"/>
</dbReference>
<dbReference type="GO" id="GO:0004222">
    <property type="term" value="F:metalloendopeptidase activity"/>
    <property type="evidence" value="ECO:0007669"/>
    <property type="project" value="InterPro"/>
</dbReference>
<dbReference type="GO" id="GO:0031593">
    <property type="term" value="F:polyubiquitin modification-dependent protein binding"/>
    <property type="evidence" value="ECO:0000318"/>
    <property type="project" value="GO_Central"/>
</dbReference>
<dbReference type="GO" id="GO:0003697">
    <property type="term" value="F:single-stranded DNA binding"/>
    <property type="evidence" value="ECO:0007669"/>
    <property type="project" value="InterPro"/>
</dbReference>
<dbReference type="GO" id="GO:0008270">
    <property type="term" value="F:zinc ion binding"/>
    <property type="evidence" value="ECO:0007669"/>
    <property type="project" value="UniProtKB-KW"/>
</dbReference>
<dbReference type="GO" id="GO:0006974">
    <property type="term" value="P:DNA damage response"/>
    <property type="evidence" value="ECO:0000315"/>
    <property type="project" value="UniProtKB"/>
</dbReference>
<dbReference type="GO" id="GO:0006281">
    <property type="term" value="P:DNA repair"/>
    <property type="evidence" value="ECO:0007669"/>
    <property type="project" value="UniProtKB-KW"/>
</dbReference>
<dbReference type="GO" id="GO:0006508">
    <property type="term" value="P:proteolysis"/>
    <property type="evidence" value="ECO:0007669"/>
    <property type="project" value="UniProtKB-KW"/>
</dbReference>
<dbReference type="InterPro" id="IPR006642">
    <property type="entry name" value="Rad18_UBZ4"/>
</dbReference>
<dbReference type="InterPro" id="IPR044245">
    <property type="entry name" value="Spartan"/>
</dbReference>
<dbReference type="InterPro" id="IPR006640">
    <property type="entry name" value="SprT-like_domain"/>
</dbReference>
<dbReference type="InterPro" id="IPR055220">
    <property type="entry name" value="SPRTN_ZBD"/>
</dbReference>
<dbReference type="PANTHER" id="PTHR21220">
    <property type="entry name" value="DNA-DEPENDENT METALLOPROTEASE SPRTN"/>
    <property type="match status" value="1"/>
</dbReference>
<dbReference type="PANTHER" id="PTHR21220:SF0">
    <property type="entry name" value="DNA-DEPENDENT METALLOPROTEASE SPRTN"/>
    <property type="match status" value="1"/>
</dbReference>
<dbReference type="Pfam" id="PF10263">
    <property type="entry name" value="SprT-like"/>
    <property type="match status" value="1"/>
</dbReference>
<dbReference type="Pfam" id="PF22934">
    <property type="entry name" value="SPRTN_ZBD"/>
    <property type="match status" value="1"/>
</dbReference>
<dbReference type="SMART" id="SM00731">
    <property type="entry name" value="SprT"/>
    <property type="match status" value="1"/>
</dbReference>
<dbReference type="SMART" id="SM00734">
    <property type="entry name" value="ZnF_Rad18"/>
    <property type="match status" value="1"/>
</dbReference>
<dbReference type="PROSITE" id="PS51908">
    <property type="entry name" value="ZF_UBZ4"/>
    <property type="match status" value="1"/>
</dbReference>
<dbReference type="PROSITE" id="PS00142">
    <property type="entry name" value="ZINC_PROTEASE"/>
    <property type="match status" value="1"/>
</dbReference>
<sequence length="368" mass="40566">MSRSSLVDPSFELSDPCPDIHALFIQFDARFFGGSLACCEVKWSPRMYACAGICSYEIRGGRGGLCSIRLSKPLLTLRPRSDLVETLLHEMIHAYLFVKERNRDRDGHGPQFQAHMHRINQAGGTNITIYHSFHDEVRLYKQHWWRCSGPCRDRRPFFGYVKRSCNRAPGPNDRWWSQHQQSCGGNFLKVKEPEGYGQGKGSKRTNDKNKSGGPALKKTITPPRVTLDDFFKKDGKNSSDNSTSKSPTKPSTSLFTGSGQKLGGSSSTSSLLNSYPKATQNSGGNRLGGTSGGVSRLLPPVNFTSPSSAPVAEQVIDLGDSDDDDFQDMDDDALEISFVASDNSVICPSCNTEVMENLIHGHLDYCLG</sequence>
<gene>
    <name evidence="7" type="primary">dvc-1</name>
    <name type="ORF">T19B10.6</name>
</gene>
<feature type="chain" id="PRO_0000420712" description="DNA-dependent metalloprotease dvc-1">
    <location>
        <begin position="1"/>
        <end position="368"/>
    </location>
</feature>
<feature type="domain" description="SprT-like">
    <location>
        <begin position="21"/>
        <end position="190"/>
    </location>
</feature>
<feature type="zinc finger region" description="UBZ4-type" evidence="2">
    <location>
        <begin position="344"/>
        <end position="368"/>
    </location>
</feature>
<feature type="region of interest" description="Disordered" evidence="4">
    <location>
        <begin position="187"/>
        <end position="309"/>
    </location>
</feature>
<feature type="compositionally biased region" description="Basic and acidic residues" evidence="4">
    <location>
        <begin position="226"/>
        <end position="237"/>
    </location>
</feature>
<feature type="compositionally biased region" description="Low complexity" evidence="4">
    <location>
        <begin position="238"/>
        <end position="274"/>
    </location>
</feature>
<feature type="active site" evidence="1 3">
    <location>
        <position position="90"/>
    </location>
</feature>
<feature type="binding site" evidence="1 3">
    <location>
        <position position="89"/>
    </location>
    <ligand>
        <name>Zn(2+)</name>
        <dbReference type="ChEBI" id="CHEBI:29105"/>
        <label>1</label>
        <note>catalytic</note>
    </ligand>
</feature>
<feature type="binding site" evidence="1 3">
    <location>
        <position position="93"/>
    </location>
    <ligand>
        <name>Zn(2+)</name>
        <dbReference type="ChEBI" id="CHEBI:29105"/>
        <label>1</label>
        <note>catalytic</note>
    </ligand>
</feature>
<feature type="binding site" evidence="1">
    <location>
        <position position="108"/>
    </location>
    <ligand>
        <name>Zn(2+)</name>
        <dbReference type="ChEBI" id="CHEBI:29105"/>
        <label>1</label>
        <note>catalytic</note>
    </ligand>
</feature>
<feature type="binding site" evidence="2">
    <location>
        <position position="347"/>
    </location>
    <ligand>
        <name>Zn(2+)</name>
        <dbReference type="ChEBI" id="CHEBI:29105"/>
        <label>2</label>
    </ligand>
</feature>
<feature type="binding site" evidence="2">
    <location>
        <position position="350"/>
    </location>
    <ligand>
        <name>Zn(2+)</name>
        <dbReference type="ChEBI" id="CHEBI:29105"/>
        <label>2</label>
    </ligand>
</feature>
<feature type="binding site" evidence="2">
    <location>
        <position position="362"/>
    </location>
    <ligand>
        <name>Zn(2+)</name>
        <dbReference type="ChEBI" id="CHEBI:29105"/>
        <label>2</label>
    </ligand>
</feature>
<feature type="binding site" evidence="2">
    <location>
        <position position="366"/>
    </location>
    <ligand>
        <name>Zn(2+)</name>
        <dbReference type="ChEBI" id="CHEBI:29105"/>
        <label>2</label>
    </ligand>
</feature>
<reference key="1">
    <citation type="journal article" date="1998" name="Science">
        <title>Genome sequence of the nematode C. elegans: a platform for investigating biology.</title>
        <authorList>
            <consortium name="The C. elegans sequencing consortium"/>
        </authorList>
    </citation>
    <scope>NUCLEOTIDE SEQUENCE [LARGE SCALE GENOMIC DNA]</scope>
    <source>
        <strain>Bristol N2</strain>
    </source>
</reference>
<reference key="2">
    <citation type="journal article" date="2012" name="Nat. Struct. Mol. Biol.">
        <title>DVC1 (C1orf124) is a DNA damage-targeting p97 adaptor that promotes ubiquitin-dependent responses to replication blocks.</title>
        <authorList>
            <person name="Mosbech A."/>
            <person name="Gibbs-Seymour I."/>
            <person name="Kagias K."/>
            <person name="Thorslund T."/>
            <person name="Beli P."/>
            <person name="Povlsen L."/>
            <person name="Nielsen S.V."/>
            <person name="Smedegaard S."/>
            <person name="Sedgwick G."/>
            <person name="Lukas C."/>
            <person name="Hartmann-Petersen R."/>
            <person name="Lukas J."/>
            <person name="Choudhary C."/>
            <person name="Pocock R."/>
            <person name="Bekker-Jensen S."/>
            <person name="Mailand N."/>
        </authorList>
    </citation>
    <scope>FUNCTION</scope>
    <scope>SUBCELLULAR LOCATION</scope>
    <scope>DISRUPTION PHENOTYPE</scope>
    <scope>SUBUNIT</scope>
</reference>
<reference key="3">
    <citation type="journal article" date="2016" name="Mol. Cell">
        <title>Mechanism and regulation of DNA-protein crosslink repair by the DNA-dependent metalloprotease SPRTN.</title>
        <authorList>
            <person name="Stingele J."/>
            <person name="Bellelli R."/>
            <person name="Alte F."/>
            <person name="Hewitt G."/>
            <person name="Sarek G."/>
            <person name="Maslen S.L."/>
            <person name="Tsutakawa S.E."/>
            <person name="Borg A."/>
            <person name="Kjaer S."/>
            <person name="Tainer J.A."/>
            <person name="Skehel J.M."/>
            <person name="Groll M."/>
            <person name="Boulton S.J."/>
        </authorList>
    </citation>
    <scope>FUNCTION</scope>
</reference>
<accession>Q22557</accession>
<proteinExistence type="evidence at protein level"/>